<evidence type="ECO:0000255" key="1">
    <source>
        <dbReference type="HAMAP-Rule" id="MF_00532"/>
    </source>
</evidence>
<evidence type="ECO:0000256" key="2">
    <source>
        <dbReference type="SAM" id="MobiDB-lite"/>
    </source>
</evidence>
<evidence type="ECO:0000305" key="3"/>
<accession>A4WF42</accession>
<feature type="chain" id="PRO_1000061003" description="Small ribosomal subunit protein uS9">
    <location>
        <begin position="1"/>
        <end position="130"/>
    </location>
</feature>
<feature type="region of interest" description="Disordered" evidence="2">
    <location>
        <begin position="111"/>
        <end position="130"/>
    </location>
</feature>
<feature type="compositionally biased region" description="Basic residues" evidence="2">
    <location>
        <begin position="116"/>
        <end position="130"/>
    </location>
</feature>
<proteinExistence type="inferred from homology"/>
<name>RS9_ENT38</name>
<protein>
    <recommendedName>
        <fullName evidence="1">Small ribosomal subunit protein uS9</fullName>
    </recommendedName>
    <alternativeName>
        <fullName evidence="3">30S ribosomal protein S9</fullName>
    </alternativeName>
</protein>
<comment type="similarity">
    <text evidence="1">Belongs to the universal ribosomal protein uS9 family.</text>
</comment>
<sequence>MAENQYYGTGRRKSSAARVFIKPGSGKIVINQRSLEQYFGRETARMVVRQPLELVDMVEKLDLYITVKGGGISGQAGAIRHGITRALMEYDESLRSELRKAGFVTRDARQVERKKVGLRKARRRPQFSKR</sequence>
<dbReference type="EMBL" id="CP000653">
    <property type="protein sequence ID" value="ABP62322.1"/>
    <property type="molecule type" value="Genomic_DNA"/>
</dbReference>
<dbReference type="RefSeq" id="WP_003860436.1">
    <property type="nucleotide sequence ID" value="NC_009436.1"/>
</dbReference>
<dbReference type="SMR" id="A4WF42"/>
<dbReference type="STRING" id="399742.Ent638_3665"/>
<dbReference type="GeneID" id="97442766"/>
<dbReference type="KEGG" id="ent:Ent638_3665"/>
<dbReference type="eggNOG" id="COG0103">
    <property type="taxonomic scope" value="Bacteria"/>
</dbReference>
<dbReference type="HOGENOM" id="CLU_046483_2_1_6"/>
<dbReference type="OrthoDB" id="9803965at2"/>
<dbReference type="Proteomes" id="UP000000230">
    <property type="component" value="Chromosome"/>
</dbReference>
<dbReference type="GO" id="GO:0022627">
    <property type="term" value="C:cytosolic small ribosomal subunit"/>
    <property type="evidence" value="ECO:0007669"/>
    <property type="project" value="TreeGrafter"/>
</dbReference>
<dbReference type="GO" id="GO:0003723">
    <property type="term" value="F:RNA binding"/>
    <property type="evidence" value="ECO:0007669"/>
    <property type="project" value="TreeGrafter"/>
</dbReference>
<dbReference type="GO" id="GO:0003735">
    <property type="term" value="F:structural constituent of ribosome"/>
    <property type="evidence" value="ECO:0007669"/>
    <property type="project" value="InterPro"/>
</dbReference>
<dbReference type="GO" id="GO:0006412">
    <property type="term" value="P:translation"/>
    <property type="evidence" value="ECO:0007669"/>
    <property type="project" value="UniProtKB-UniRule"/>
</dbReference>
<dbReference type="FunFam" id="3.30.230.10:FF:000001">
    <property type="entry name" value="30S ribosomal protein S9"/>
    <property type="match status" value="1"/>
</dbReference>
<dbReference type="Gene3D" id="3.30.230.10">
    <property type="match status" value="1"/>
</dbReference>
<dbReference type="HAMAP" id="MF_00532_B">
    <property type="entry name" value="Ribosomal_uS9_B"/>
    <property type="match status" value="1"/>
</dbReference>
<dbReference type="InterPro" id="IPR020568">
    <property type="entry name" value="Ribosomal_Su5_D2-typ_SF"/>
</dbReference>
<dbReference type="InterPro" id="IPR000754">
    <property type="entry name" value="Ribosomal_uS9"/>
</dbReference>
<dbReference type="InterPro" id="IPR023035">
    <property type="entry name" value="Ribosomal_uS9_bac/plastid"/>
</dbReference>
<dbReference type="InterPro" id="IPR020574">
    <property type="entry name" value="Ribosomal_uS9_CS"/>
</dbReference>
<dbReference type="InterPro" id="IPR014721">
    <property type="entry name" value="Ribsml_uS5_D2-typ_fold_subgr"/>
</dbReference>
<dbReference type="NCBIfam" id="NF001099">
    <property type="entry name" value="PRK00132.1"/>
    <property type="match status" value="1"/>
</dbReference>
<dbReference type="PANTHER" id="PTHR21569">
    <property type="entry name" value="RIBOSOMAL PROTEIN S9"/>
    <property type="match status" value="1"/>
</dbReference>
<dbReference type="PANTHER" id="PTHR21569:SF1">
    <property type="entry name" value="SMALL RIBOSOMAL SUBUNIT PROTEIN US9M"/>
    <property type="match status" value="1"/>
</dbReference>
<dbReference type="Pfam" id="PF00380">
    <property type="entry name" value="Ribosomal_S9"/>
    <property type="match status" value="1"/>
</dbReference>
<dbReference type="SUPFAM" id="SSF54211">
    <property type="entry name" value="Ribosomal protein S5 domain 2-like"/>
    <property type="match status" value="1"/>
</dbReference>
<dbReference type="PROSITE" id="PS00360">
    <property type="entry name" value="RIBOSOMAL_S9"/>
    <property type="match status" value="1"/>
</dbReference>
<keyword id="KW-0687">Ribonucleoprotein</keyword>
<keyword id="KW-0689">Ribosomal protein</keyword>
<gene>
    <name evidence="1" type="primary">rpsI</name>
    <name type="ordered locus">Ent638_3665</name>
</gene>
<organism>
    <name type="scientific">Enterobacter sp. (strain 638)</name>
    <dbReference type="NCBI Taxonomy" id="399742"/>
    <lineage>
        <taxon>Bacteria</taxon>
        <taxon>Pseudomonadati</taxon>
        <taxon>Pseudomonadota</taxon>
        <taxon>Gammaproteobacteria</taxon>
        <taxon>Enterobacterales</taxon>
        <taxon>Enterobacteriaceae</taxon>
        <taxon>Enterobacter</taxon>
    </lineage>
</organism>
<reference key="1">
    <citation type="journal article" date="2010" name="PLoS Genet.">
        <title>Genome sequence of the plant growth promoting endophytic bacterium Enterobacter sp. 638.</title>
        <authorList>
            <person name="Taghavi S."/>
            <person name="van der Lelie D."/>
            <person name="Hoffman A."/>
            <person name="Zhang Y.B."/>
            <person name="Walla M.D."/>
            <person name="Vangronsveld J."/>
            <person name="Newman L."/>
            <person name="Monchy S."/>
        </authorList>
    </citation>
    <scope>NUCLEOTIDE SEQUENCE [LARGE SCALE GENOMIC DNA]</scope>
    <source>
        <strain>638</strain>
    </source>
</reference>